<gene>
    <name type="ordered locus">HI_1128</name>
</gene>
<feature type="chain" id="PRO_0000078007" description="Uncharacterized protein HI_1128">
    <location>
        <begin position="1"/>
        <end position="58"/>
    </location>
</feature>
<feature type="transmembrane region" description="Helical" evidence="1">
    <location>
        <begin position="24"/>
        <end position="44"/>
    </location>
</feature>
<protein>
    <recommendedName>
        <fullName>Uncharacterized protein HI_1128</fullName>
    </recommendedName>
</protein>
<sequence>MVYHNSMCTYLFYNKIGFGLDYQLSVYLGLATTIVCIVLFFTMLKPLGTRDEEAYINN</sequence>
<evidence type="ECO:0000255" key="1"/>
<evidence type="ECO:0000305" key="2"/>
<proteinExistence type="predicted"/>
<name>Y1128_HAEIN</name>
<reference key="1">
    <citation type="journal article" date="1995" name="Science">
        <title>Whole-genome random sequencing and assembly of Haemophilus influenzae Rd.</title>
        <authorList>
            <person name="Fleischmann R.D."/>
            <person name="Adams M.D."/>
            <person name="White O."/>
            <person name="Clayton R.A."/>
            <person name="Kirkness E.F."/>
            <person name="Kerlavage A.R."/>
            <person name="Bult C.J."/>
            <person name="Tomb J.-F."/>
            <person name="Dougherty B.A."/>
            <person name="Merrick J.M."/>
            <person name="McKenney K."/>
            <person name="Sutton G.G."/>
            <person name="FitzHugh W."/>
            <person name="Fields C.A."/>
            <person name="Gocayne J.D."/>
            <person name="Scott J.D."/>
            <person name="Shirley R."/>
            <person name="Liu L.-I."/>
            <person name="Glodek A."/>
            <person name="Kelley J.M."/>
            <person name="Weidman J.F."/>
            <person name="Phillips C.A."/>
            <person name="Spriggs T."/>
            <person name="Hedblom E."/>
            <person name="Cotton M.D."/>
            <person name="Utterback T.R."/>
            <person name="Hanna M.C."/>
            <person name="Nguyen D.T."/>
            <person name="Saudek D.M."/>
            <person name="Brandon R.C."/>
            <person name="Fine L.D."/>
            <person name="Fritchman J.L."/>
            <person name="Fuhrmann J.L."/>
            <person name="Geoghagen N.S.M."/>
            <person name="Gnehm C.L."/>
            <person name="McDonald L.A."/>
            <person name="Small K.V."/>
            <person name="Fraser C.M."/>
            <person name="Smith H.O."/>
            <person name="Venter J.C."/>
        </authorList>
    </citation>
    <scope>NUCLEOTIDE SEQUENCE [LARGE SCALE GENOMIC DNA]</scope>
    <source>
        <strain>ATCC 51907 / DSM 11121 / KW20 / Rd</strain>
    </source>
</reference>
<accession>P44115</accession>
<organism>
    <name type="scientific">Haemophilus influenzae (strain ATCC 51907 / DSM 11121 / KW20 / Rd)</name>
    <dbReference type="NCBI Taxonomy" id="71421"/>
    <lineage>
        <taxon>Bacteria</taxon>
        <taxon>Pseudomonadati</taxon>
        <taxon>Pseudomonadota</taxon>
        <taxon>Gammaproteobacteria</taxon>
        <taxon>Pasteurellales</taxon>
        <taxon>Pasteurellaceae</taxon>
        <taxon>Haemophilus</taxon>
    </lineage>
</organism>
<comment type="subcellular location">
    <subcellularLocation>
        <location evidence="2">Membrane</location>
        <topology evidence="2">Single-pass membrane protein</topology>
    </subcellularLocation>
</comment>
<keyword id="KW-0472">Membrane</keyword>
<keyword id="KW-1185">Reference proteome</keyword>
<keyword id="KW-0812">Transmembrane</keyword>
<keyword id="KW-1133">Transmembrane helix</keyword>
<dbReference type="EMBL" id="L42023">
    <property type="protein sequence ID" value="AAC22783.1"/>
    <property type="molecule type" value="Genomic_DNA"/>
</dbReference>
<dbReference type="PIR" id="G64020">
    <property type="entry name" value="G64020"/>
</dbReference>
<dbReference type="SMR" id="P44115"/>
<dbReference type="STRING" id="71421.HI_1128"/>
<dbReference type="EnsemblBacteria" id="AAC22783">
    <property type="protein sequence ID" value="AAC22783"/>
    <property type="gene ID" value="HI_1128"/>
</dbReference>
<dbReference type="KEGG" id="hin:HI_1128"/>
<dbReference type="eggNOG" id="COG1966">
    <property type="taxonomic scope" value="Bacteria"/>
</dbReference>
<dbReference type="HOGENOM" id="CLU_2973117_0_0_6"/>
<dbReference type="Proteomes" id="UP000000579">
    <property type="component" value="Chromosome"/>
</dbReference>
<dbReference type="GO" id="GO:0016020">
    <property type="term" value="C:membrane"/>
    <property type="evidence" value="ECO:0007669"/>
    <property type="project" value="UniProtKB-SubCell"/>
</dbReference>